<reference key="1">
    <citation type="submission" date="2004-11" db="EMBL/GenBank/DDBJ databases">
        <title>Complete genome sequence of Thermus thermophilus HB8.</title>
        <authorList>
            <person name="Masui R."/>
            <person name="Kurokawa K."/>
            <person name="Nakagawa N."/>
            <person name="Tokunaga F."/>
            <person name="Koyama Y."/>
            <person name="Shibata T."/>
            <person name="Oshima T."/>
            <person name="Yokoyama S."/>
            <person name="Yasunaga T."/>
            <person name="Kuramitsu S."/>
        </authorList>
    </citation>
    <scope>NUCLEOTIDE SEQUENCE [LARGE SCALE GENOMIC DNA]</scope>
    <source>
        <strain>ATCC 27634 / DSM 579 / HB8</strain>
    </source>
</reference>
<reference key="2">
    <citation type="journal article" date="2009" name="Nat. Chem. Biol.">
        <title>Discovery of proteinaceous N-modification in lysine biosynthesis of Thermus thermophilus.</title>
        <authorList>
            <person name="Horie A."/>
            <person name="Tomita T."/>
            <person name="Saiki A."/>
            <person name="Kono H."/>
            <person name="Taka H."/>
            <person name="Mineki R."/>
            <person name="Fujimura T."/>
            <person name="Nishiyama C."/>
            <person name="Kuzuyama T."/>
            <person name="Nishiyama M."/>
        </authorList>
    </citation>
    <scope>FUNCTION</scope>
    <scope>MUTAGENESIS OF GLU-54</scope>
    <scope>IDENTIFICATION BY MASS SPECTROMETRY</scope>
    <scope>IRON-BINDING</scope>
    <scope>BIOPHYSICOCHEMICAL PROPERTIES</scope>
</reference>
<organism>
    <name type="scientific">Thermus thermophilus (strain ATCC 27634 / DSM 579 / HB8)</name>
    <dbReference type="NCBI Taxonomy" id="300852"/>
    <lineage>
        <taxon>Bacteria</taxon>
        <taxon>Thermotogati</taxon>
        <taxon>Deinococcota</taxon>
        <taxon>Deinococci</taxon>
        <taxon>Thermales</taxon>
        <taxon>Thermaceae</taxon>
        <taxon>Thermus</taxon>
    </lineage>
</organism>
<protein>
    <recommendedName>
        <fullName>Alpha-aminoadipate carrier protein LysW</fullName>
    </recommendedName>
    <alternativeName>
        <fullName>AAA carrier protein LysW</fullName>
    </alternativeName>
</protein>
<gene>
    <name type="primary">lysW</name>
    <name type="ordered locus">TTHA1908</name>
</gene>
<keyword id="KW-0002">3D-structure</keyword>
<keyword id="KW-0028">Amino-acid biosynthesis</keyword>
<keyword id="KW-0408">Iron</keyword>
<keyword id="KW-1017">Isopeptide bond</keyword>
<keyword id="KW-0457">Lysine biosynthesis</keyword>
<keyword id="KW-0479">Metal-binding</keyword>
<keyword id="KW-1185">Reference proteome</keyword>
<keyword id="KW-0862">Zinc</keyword>
<keyword id="KW-0863">Zinc-finger</keyword>
<accession>Q5SH22</accession>
<evidence type="ECO:0000255" key="1"/>
<evidence type="ECO:0000269" key="2">
    <source>
    </source>
</evidence>
<evidence type="ECO:0000305" key="3">
    <source>
    </source>
</evidence>
<evidence type="ECO:0007829" key="4">
    <source>
        <dbReference type="PDB" id="3WWL"/>
    </source>
</evidence>
<comment type="function">
    <text evidence="2">Carrier protein that bears the covalently bound substrates for lysine biosynthesis; the bound alpha-aminoadipate (AAA) is sequentially converted to L-lysine.</text>
</comment>
<comment type="biophysicochemical properties">
    <kinetics>
        <KM evidence="2">78 uM for alpha-aminodipate</KM>
    </kinetics>
</comment>
<comment type="pathway">
    <text>Amino-acid biosynthesis; L-lysine biosynthesis via AAA pathway.</text>
</comment>
<comment type="PTM">
    <text evidence="2">Formation of an isopeptide bond between the gamma-carboxyl group of the C-terminal glutamate and the amino group of alpha-aminoadipate (AAA) is catalyzed by LysX. The bound AAA is then converted to L-lysine in a series of reactions catalyzed by LysZ, LysY and LysJ. Release of the product L-lysine is catalyzed by LysK (PubMed:19620981).</text>
</comment>
<comment type="miscellaneous">
    <text evidence="3">The purified protein is red, and its absorption spectrum suggests that it binds iron ions, possibly via the predicted zinc finger domain (PubMed:19620981). In contrast, the ortholog from Sulfolobus clearly binds zinc ions via its zinc finger domain, as shown by X-ray crystallography.</text>
</comment>
<name>LYSW_THET8</name>
<dbReference type="EMBL" id="AP008226">
    <property type="protein sequence ID" value="BAD71731.1"/>
    <property type="molecule type" value="Genomic_DNA"/>
</dbReference>
<dbReference type="RefSeq" id="WP_011229005.1">
    <property type="nucleotide sequence ID" value="NC_006461.1"/>
</dbReference>
<dbReference type="RefSeq" id="YP_145174.1">
    <property type="nucleotide sequence ID" value="NC_006461.1"/>
</dbReference>
<dbReference type="PDB" id="3WWL">
    <property type="method" value="X-ray"/>
    <property type="resolution" value="1.20 A"/>
    <property type="chains" value="A=1-54"/>
</dbReference>
<dbReference type="PDBsum" id="3WWL"/>
<dbReference type="SMR" id="Q5SH22"/>
<dbReference type="EnsemblBacteria" id="BAD71731">
    <property type="protein sequence ID" value="BAD71731"/>
    <property type="gene ID" value="BAD71731"/>
</dbReference>
<dbReference type="GeneID" id="3167976"/>
<dbReference type="KEGG" id="ttj:TTHA1908"/>
<dbReference type="PATRIC" id="fig|300852.9.peg.1876"/>
<dbReference type="eggNOG" id="ENOG503361X">
    <property type="taxonomic scope" value="Bacteria"/>
</dbReference>
<dbReference type="HOGENOM" id="CLU_195720_0_0_0"/>
<dbReference type="PhylomeDB" id="Q5SH22"/>
<dbReference type="SABIO-RK" id="Q5SH22"/>
<dbReference type="UniPathway" id="UPA00033"/>
<dbReference type="EvolutionaryTrace" id="Q5SH22"/>
<dbReference type="Proteomes" id="UP000000532">
    <property type="component" value="Chromosome"/>
</dbReference>
<dbReference type="GO" id="GO:0008270">
    <property type="term" value="F:zinc ion binding"/>
    <property type="evidence" value="ECO:0007669"/>
    <property type="project" value="UniProtKB-KW"/>
</dbReference>
<dbReference type="GO" id="GO:0019878">
    <property type="term" value="P:lysine biosynthetic process via aminoadipic acid"/>
    <property type="evidence" value="ECO:0007669"/>
    <property type="project" value="UniProtKB-UniPathway"/>
</dbReference>
<dbReference type="Gene3D" id="2.20.28.160">
    <property type="match status" value="1"/>
</dbReference>
<dbReference type="InterPro" id="IPR005906">
    <property type="entry name" value="LysW"/>
</dbReference>
<dbReference type="NCBIfam" id="TIGR01206">
    <property type="entry name" value="lysW"/>
    <property type="match status" value="1"/>
</dbReference>
<dbReference type="PANTHER" id="PTHR40393:SF1">
    <property type="entry name" value="LYSINE BIOSYNTHESIS PROTEIN-RELATED"/>
    <property type="match status" value="1"/>
</dbReference>
<dbReference type="PANTHER" id="PTHR40393">
    <property type="entry name" value="LYSINE BIOSYNTHESIS PROTEIN-RELATED-RELATED"/>
    <property type="match status" value="1"/>
</dbReference>
<dbReference type="Pfam" id="PF21344">
    <property type="entry name" value="Zn_ribbon_LysW"/>
    <property type="match status" value="1"/>
</dbReference>
<feature type="chain" id="PRO_0000391002" description="Alpha-aminoadipate carrier protein LysW">
    <location>
        <begin position="1"/>
        <end position="54"/>
    </location>
</feature>
<feature type="zinc finger region" description="TFIIB-type">
    <location>
        <begin position="1"/>
        <end position="33"/>
    </location>
</feature>
<feature type="short sequence motif" description="EDWGE">
    <location>
        <position position="50"/>
    </location>
</feature>
<feature type="binding site" evidence="1">
    <location>
        <position position="5"/>
    </location>
    <ligand>
        <name>Fe cation</name>
        <dbReference type="ChEBI" id="CHEBI:24875"/>
    </ligand>
</feature>
<feature type="binding site" evidence="1">
    <location>
        <position position="8"/>
    </location>
    <ligand>
        <name>Fe cation</name>
        <dbReference type="ChEBI" id="CHEBI:24875"/>
    </ligand>
</feature>
<feature type="binding site" evidence="1">
    <location>
        <position position="25"/>
    </location>
    <ligand>
        <name>Fe cation</name>
        <dbReference type="ChEBI" id="CHEBI:24875"/>
    </ligand>
</feature>
<feature type="binding site" evidence="1">
    <location>
        <position position="28"/>
    </location>
    <ligand>
        <name>Fe cation</name>
        <dbReference type="ChEBI" id="CHEBI:24875"/>
    </ligand>
</feature>
<feature type="modified residue" description="5-glutamyl 2-aminoadipic acid; alternate">
    <location>
        <position position="54"/>
    </location>
</feature>
<feature type="modified residue" description="5-glutamyl N2-lysine; alternate">
    <location>
        <position position="54"/>
    </location>
</feature>
<feature type="mutagenesis site" description="Disrupts lysine biosynthesis. Lysine-auxotrophic phenotype." evidence="2">
    <original>E</original>
    <variation>A</variation>
    <location>
        <position position="54"/>
    </location>
</feature>
<feature type="strand" evidence="4">
    <location>
        <begin position="2"/>
        <end position="4"/>
    </location>
</feature>
<feature type="turn" evidence="4">
    <location>
        <begin position="6"/>
        <end position="8"/>
    </location>
</feature>
<feature type="strand" evidence="4">
    <location>
        <begin position="11"/>
        <end position="13"/>
    </location>
</feature>
<feature type="strand" evidence="4">
    <location>
        <begin position="22"/>
        <end position="24"/>
    </location>
</feature>
<feature type="turn" evidence="4">
    <location>
        <begin position="26"/>
        <end position="28"/>
    </location>
</feature>
<feature type="strand" evidence="4">
    <location>
        <begin position="31"/>
        <end position="36"/>
    </location>
</feature>
<feature type="turn" evidence="4">
    <location>
        <begin position="37"/>
        <end position="40"/>
    </location>
</feature>
<feature type="strand" evidence="4">
    <location>
        <begin position="41"/>
        <end position="44"/>
    </location>
</feature>
<sequence length="54" mass="5812">MVGTCPECGAELRLENPELGELVVCEDCGAELEVVGLDPLRLEPAPEEAEDWGE</sequence>
<proteinExistence type="evidence at protein level"/>